<name>RGL2_HUMAN</name>
<dbReference type="EMBL" id="Z97184">
    <property type="protein sequence ID" value="CAB09992.1"/>
    <property type="molecule type" value="Genomic_DNA"/>
</dbReference>
<dbReference type="EMBL" id="AL050259">
    <property type="protein sequence ID" value="CAB43361.1"/>
    <property type="molecule type" value="mRNA"/>
</dbReference>
<dbReference type="EMBL" id="AK294442">
    <property type="protein sequence ID" value="BAG57683.1"/>
    <property type="molecule type" value="mRNA"/>
</dbReference>
<dbReference type="EMBL" id="AL662820">
    <property type="status" value="NOT_ANNOTATED_CDS"/>
    <property type="molecule type" value="Genomic_DNA"/>
</dbReference>
<dbReference type="EMBL" id="AL662827">
    <property type="status" value="NOT_ANNOTATED_CDS"/>
    <property type="molecule type" value="Genomic_DNA"/>
</dbReference>
<dbReference type="EMBL" id="BX000343">
    <property type="status" value="NOT_ANNOTATED_CDS"/>
    <property type="molecule type" value="Genomic_DNA"/>
</dbReference>
<dbReference type="EMBL" id="CR759786">
    <property type="status" value="NOT_ANNOTATED_CDS"/>
    <property type="molecule type" value="Genomic_DNA"/>
</dbReference>
<dbReference type="EMBL" id="CR759817">
    <property type="status" value="NOT_ANNOTATED_CDS"/>
    <property type="molecule type" value="Genomic_DNA"/>
</dbReference>
<dbReference type="EMBL" id="CH471081">
    <property type="protein sequence ID" value="EAX03709.1"/>
    <property type="molecule type" value="Genomic_DNA"/>
</dbReference>
<dbReference type="EMBL" id="BC032681">
    <property type="protein sequence ID" value="AAH32681.1"/>
    <property type="molecule type" value="mRNA"/>
</dbReference>
<dbReference type="EMBL" id="D85757">
    <property type="protein sequence ID" value="BAA75926.1"/>
    <property type="molecule type" value="mRNA"/>
</dbReference>
<dbReference type="CCDS" id="CCDS4774.1">
    <molecule id="O15211-1"/>
</dbReference>
<dbReference type="PIR" id="T08659">
    <property type="entry name" value="T08659"/>
</dbReference>
<dbReference type="RefSeq" id="NP_001230667.1">
    <property type="nucleotide sequence ID" value="NM_001243738.1"/>
</dbReference>
<dbReference type="RefSeq" id="NP_004752.1">
    <molecule id="O15211-1"/>
    <property type="nucleotide sequence ID" value="NM_004761.5"/>
</dbReference>
<dbReference type="RefSeq" id="XP_054185812.1">
    <molecule id="O15211-1"/>
    <property type="nucleotide sequence ID" value="XM_054329837.1"/>
</dbReference>
<dbReference type="RefSeq" id="XP_054186297.1">
    <molecule id="O15211-1"/>
    <property type="nucleotide sequence ID" value="XM_054330322.1"/>
</dbReference>
<dbReference type="RefSeq" id="XP_054187073.1">
    <molecule id="O15211-1"/>
    <property type="nucleotide sequence ID" value="XM_054331098.1"/>
</dbReference>
<dbReference type="PDB" id="8AU4">
    <property type="method" value="NMR"/>
    <property type="chains" value="A=643-740"/>
</dbReference>
<dbReference type="PDB" id="8B69">
    <property type="method" value="X-ray"/>
    <property type="resolution" value="3.07 A"/>
    <property type="chains" value="A/C=643-740"/>
</dbReference>
<dbReference type="PDBsum" id="8AU4"/>
<dbReference type="PDBsum" id="8B69"/>
<dbReference type="SMR" id="O15211"/>
<dbReference type="BioGRID" id="111801">
    <property type="interactions" value="28"/>
</dbReference>
<dbReference type="FunCoup" id="O15211">
    <property type="interactions" value="360"/>
</dbReference>
<dbReference type="IntAct" id="O15211">
    <property type="interactions" value="25"/>
</dbReference>
<dbReference type="MINT" id="O15211"/>
<dbReference type="STRING" id="9606.ENSP00000420211"/>
<dbReference type="GlyGen" id="O15211">
    <property type="glycosylation" value="1 site"/>
</dbReference>
<dbReference type="iPTMnet" id="O15211"/>
<dbReference type="PhosphoSitePlus" id="O15211"/>
<dbReference type="BioMuta" id="RGL2"/>
<dbReference type="jPOST" id="O15211"/>
<dbReference type="MassIVE" id="O15211"/>
<dbReference type="PaxDb" id="9606-ENSP00000420211"/>
<dbReference type="PeptideAtlas" id="O15211"/>
<dbReference type="ProteomicsDB" id="4111"/>
<dbReference type="ProteomicsDB" id="48511">
    <molecule id="O15211-1"/>
</dbReference>
<dbReference type="Pumba" id="O15211"/>
<dbReference type="Antibodypedia" id="29066">
    <property type="antibodies" value="196 antibodies from 26 providers"/>
</dbReference>
<dbReference type="DNASU" id="5863"/>
<dbReference type="Ensembl" id="ENST00000383204.8">
    <molecule id="O15211-1"/>
    <property type="protein sequence ID" value="ENSP00000372691.4"/>
    <property type="gene ID" value="ENSG00000206282.11"/>
</dbReference>
<dbReference type="Ensembl" id="ENST00000413136.6">
    <molecule id="O15211-1"/>
    <property type="protein sequence ID" value="ENSP00000407088.2"/>
    <property type="gene ID" value="ENSG00000224841.9"/>
</dbReference>
<dbReference type="Ensembl" id="ENST00000416548.6">
    <molecule id="O15211-1"/>
    <property type="protein sequence ID" value="ENSP00000412152.2"/>
    <property type="gene ID" value="ENSG00000228736.9"/>
</dbReference>
<dbReference type="Ensembl" id="ENST00000452084.6">
    <molecule id="O15211-1"/>
    <property type="protein sequence ID" value="ENSP00000390098.2"/>
    <property type="gene ID" value="ENSG00000237825.9"/>
</dbReference>
<dbReference type="Ensembl" id="ENST00000497454.6">
    <molecule id="O15211-1"/>
    <property type="protein sequence ID" value="ENSP00000420211.1"/>
    <property type="gene ID" value="ENSG00000237441.10"/>
</dbReference>
<dbReference type="GeneID" id="5863"/>
<dbReference type="KEGG" id="hsa:5863"/>
<dbReference type="MANE-Select" id="ENST00000497454.6">
    <property type="protein sequence ID" value="ENSP00000420211.1"/>
    <property type="RefSeq nucleotide sequence ID" value="NM_004761.5"/>
    <property type="RefSeq protein sequence ID" value="NP_004752.1"/>
</dbReference>
<dbReference type="UCSC" id="uc003odv.4">
    <molecule id="O15211-1"/>
    <property type="organism name" value="human"/>
</dbReference>
<dbReference type="AGR" id="HGNC:9769"/>
<dbReference type="CTD" id="5863"/>
<dbReference type="DisGeNET" id="5863"/>
<dbReference type="GeneCards" id="RGL2"/>
<dbReference type="HGNC" id="HGNC:9769">
    <property type="gene designation" value="RGL2"/>
</dbReference>
<dbReference type="HPA" id="ENSG00000237441">
    <property type="expression patterns" value="Low tissue specificity"/>
</dbReference>
<dbReference type="MalaCards" id="RGL2"/>
<dbReference type="MIM" id="602306">
    <property type="type" value="gene"/>
</dbReference>
<dbReference type="neXtProt" id="NX_O15211"/>
<dbReference type="OpenTargets" id="ENSG00000237441"/>
<dbReference type="PharmGKB" id="PA34120"/>
<dbReference type="VEuPathDB" id="HostDB:ENSG00000237441"/>
<dbReference type="eggNOG" id="KOG3629">
    <property type="taxonomic scope" value="Eukaryota"/>
</dbReference>
<dbReference type="GeneTree" id="ENSGT00940000161403"/>
<dbReference type="HOGENOM" id="CLU_010252_0_2_1"/>
<dbReference type="InParanoid" id="O15211"/>
<dbReference type="OMA" id="IQQWLRG"/>
<dbReference type="OrthoDB" id="26687at2759"/>
<dbReference type="PAN-GO" id="O15211">
    <property type="GO annotations" value="4 GO annotations based on evolutionary models"/>
</dbReference>
<dbReference type="PhylomeDB" id="O15211"/>
<dbReference type="TreeFam" id="TF315204"/>
<dbReference type="PathwayCommons" id="O15211"/>
<dbReference type="Reactome" id="R-HSA-5673001">
    <property type="pathway name" value="RAF/MAP kinase cascade"/>
</dbReference>
<dbReference type="SignaLink" id="O15211"/>
<dbReference type="BioGRID-ORCS" id="5863">
    <property type="hits" value="16 hits in 1154 CRISPR screens"/>
</dbReference>
<dbReference type="ChiTaRS" id="RGL2">
    <property type="organism name" value="human"/>
</dbReference>
<dbReference type="GeneWiki" id="RGL2"/>
<dbReference type="GenomeRNAi" id="5863"/>
<dbReference type="Pharos" id="O15211">
    <property type="development level" value="Tbio"/>
</dbReference>
<dbReference type="PRO" id="PR:O15211"/>
<dbReference type="Proteomes" id="UP000005640">
    <property type="component" value="Chromosome 6"/>
</dbReference>
<dbReference type="RNAct" id="O15211">
    <property type="molecule type" value="protein"/>
</dbReference>
<dbReference type="Bgee" id="ENSG00000237441">
    <property type="expression patterns" value="Expressed in spleen and 96 other cell types or tissues"/>
</dbReference>
<dbReference type="ExpressionAtlas" id="O15211">
    <property type="expression patterns" value="baseline and differential"/>
</dbReference>
<dbReference type="GO" id="GO:0005829">
    <property type="term" value="C:cytosol"/>
    <property type="evidence" value="ECO:0000304"/>
    <property type="project" value="Reactome"/>
</dbReference>
<dbReference type="GO" id="GO:0005085">
    <property type="term" value="F:guanyl-nucleotide exchange factor activity"/>
    <property type="evidence" value="ECO:0000303"/>
    <property type="project" value="UniProtKB"/>
</dbReference>
<dbReference type="GO" id="GO:0010667">
    <property type="term" value="P:negative regulation of cardiac muscle cell apoptotic process"/>
    <property type="evidence" value="ECO:0007669"/>
    <property type="project" value="Ensembl"/>
</dbReference>
<dbReference type="GO" id="GO:0051897">
    <property type="term" value="P:positive regulation of phosphatidylinositol 3-kinase/protein kinase B signal transduction"/>
    <property type="evidence" value="ECO:0007669"/>
    <property type="project" value="Ensembl"/>
</dbReference>
<dbReference type="GO" id="GO:0007265">
    <property type="term" value="P:Ras protein signal transduction"/>
    <property type="evidence" value="ECO:0000303"/>
    <property type="project" value="UniProtKB"/>
</dbReference>
<dbReference type="GO" id="GO:0032485">
    <property type="term" value="P:regulation of Ral protein signal transduction"/>
    <property type="evidence" value="ECO:0007669"/>
    <property type="project" value="Ensembl"/>
</dbReference>
<dbReference type="CDD" id="cd17211">
    <property type="entry name" value="RA_RGL2"/>
    <property type="match status" value="1"/>
</dbReference>
<dbReference type="CDD" id="cd00155">
    <property type="entry name" value="RasGEF"/>
    <property type="match status" value="1"/>
</dbReference>
<dbReference type="CDD" id="cd06224">
    <property type="entry name" value="REM"/>
    <property type="match status" value="1"/>
</dbReference>
<dbReference type="FunFam" id="3.10.20.90:FF:000153">
    <property type="entry name" value="Ral guanine nucleotide dissociation stimulator like 2"/>
    <property type="match status" value="1"/>
</dbReference>
<dbReference type="FunFam" id="1.10.840.10:FF:000012">
    <property type="entry name" value="Ral guanine nucleotide dissociation stimulator-like 2"/>
    <property type="match status" value="1"/>
</dbReference>
<dbReference type="Gene3D" id="3.10.20.90">
    <property type="entry name" value="Phosphatidylinositol 3-kinase Catalytic Subunit, Chain A, domain 1"/>
    <property type="match status" value="1"/>
</dbReference>
<dbReference type="Gene3D" id="1.10.840.10">
    <property type="entry name" value="Ras guanine-nucleotide exchange factors catalytic domain"/>
    <property type="match status" value="1"/>
</dbReference>
<dbReference type="Gene3D" id="1.20.870.10">
    <property type="entry name" value="Son of sevenless (SoS) protein Chain: S domain 1"/>
    <property type="match status" value="1"/>
</dbReference>
<dbReference type="InterPro" id="IPR000159">
    <property type="entry name" value="RA_dom"/>
</dbReference>
<dbReference type="InterPro" id="IPR008937">
    <property type="entry name" value="Ras-like_GEF"/>
</dbReference>
<dbReference type="InterPro" id="IPR000651">
    <property type="entry name" value="Ras-like_Gua-exchang_fac_N"/>
</dbReference>
<dbReference type="InterPro" id="IPR019804">
    <property type="entry name" value="Ras_G-nucl-exch_fac_CS"/>
</dbReference>
<dbReference type="InterPro" id="IPR023578">
    <property type="entry name" value="Ras_GEF_dom_sf"/>
</dbReference>
<dbReference type="InterPro" id="IPR001895">
    <property type="entry name" value="RASGEF_cat_dom"/>
</dbReference>
<dbReference type="InterPro" id="IPR036964">
    <property type="entry name" value="RASGEF_cat_dom_sf"/>
</dbReference>
<dbReference type="InterPro" id="IPR029071">
    <property type="entry name" value="Ubiquitin-like_domsf"/>
</dbReference>
<dbReference type="PANTHER" id="PTHR23113">
    <property type="entry name" value="GUANINE NUCLEOTIDE EXCHANGE FACTOR"/>
    <property type="match status" value="1"/>
</dbReference>
<dbReference type="PANTHER" id="PTHR23113:SF350">
    <property type="entry name" value="RAL GUANINE NUCLEOTIDE DISSOCIATION STIMULATOR-LIKE 2 ISOFORM X1"/>
    <property type="match status" value="1"/>
</dbReference>
<dbReference type="Pfam" id="PF00788">
    <property type="entry name" value="RA"/>
    <property type="match status" value="1"/>
</dbReference>
<dbReference type="Pfam" id="PF00617">
    <property type="entry name" value="RasGEF"/>
    <property type="match status" value="1"/>
</dbReference>
<dbReference type="Pfam" id="PF00618">
    <property type="entry name" value="RasGEF_N"/>
    <property type="match status" value="1"/>
</dbReference>
<dbReference type="SMART" id="SM00314">
    <property type="entry name" value="RA"/>
    <property type="match status" value="1"/>
</dbReference>
<dbReference type="SMART" id="SM00147">
    <property type="entry name" value="RasGEF"/>
    <property type="match status" value="1"/>
</dbReference>
<dbReference type="SMART" id="SM00229">
    <property type="entry name" value="RasGEFN"/>
    <property type="match status" value="1"/>
</dbReference>
<dbReference type="SUPFAM" id="SSF48366">
    <property type="entry name" value="Ras GEF"/>
    <property type="match status" value="1"/>
</dbReference>
<dbReference type="SUPFAM" id="SSF54236">
    <property type="entry name" value="Ubiquitin-like"/>
    <property type="match status" value="1"/>
</dbReference>
<dbReference type="PROSITE" id="PS50200">
    <property type="entry name" value="RA"/>
    <property type="match status" value="1"/>
</dbReference>
<dbReference type="PROSITE" id="PS00720">
    <property type="entry name" value="RASGEF"/>
    <property type="match status" value="1"/>
</dbReference>
<dbReference type="PROSITE" id="PS50009">
    <property type="entry name" value="RASGEF_CAT"/>
    <property type="match status" value="1"/>
</dbReference>
<dbReference type="PROSITE" id="PS50212">
    <property type="entry name" value="RASGEF_NTER"/>
    <property type="match status" value="1"/>
</dbReference>
<reference key="1">
    <citation type="journal article" date="1998" name="J. Mol. Biol.">
        <title>TAPASIN, DAXX, RGL2, HKE2 and four new genes (BING 1, 3 to 5) form a dense cluster at the centromeric end of the MHC.</title>
        <authorList>
            <person name="Herberg J.A."/>
            <person name="Beck S."/>
            <person name="Trowsdale J."/>
        </authorList>
    </citation>
    <scope>NUCLEOTIDE SEQUENCE [GENOMIC DNA]</scope>
</reference>
<reference key="2">
    <citation type="journal article" date="2001" name="Genome Res.">
        <title>Towards a catalog of human genes and proteins: sequencing and analysis of 500 novel complete protein coding human cDNAs.</title>
        <authorList>
            <person name="Wiemann S."/>
            <person name="Weil B."/>
            <person name="Wellenreuther R."/>
            <person name="Gassenhuber J."/>
            <person name="Glassl S."/>
            <person name="Ansorge W."/>
            <person name="Boecher M."/>
            <person name="Bloecker H."/>
            <person name="Bauersachs S."/>
            <person name="Blum H."/>
            <person name="Lauber J."/>
            <person name="Duesterhoeft A."/>
            <person name="Beyer A."/>
            <person name="Koehrer K."/>
            <person name="Strack N."/>
            <person name="Mewes H.-W."/>
            <person name="Ottenwaelder B."/>
            <person name="Obermaier B."/>
            <person name="Tampe J."/>
            <person name="Heubner D."/>
            <person name="Wambutt R."/>
            <person name="Korn B."/>
            <person name="Klein M."/>
            <person name="Poustka A."/>
        </authorList>
    </citation>
    <scope>NUCLEOTIDE SEQUENCE [LARGE SCALE MRNA] (ISOFORM 1)</scope>
    <source>
        <tissue>Brain</tissue>
    </source>
</reference>
<reference key="3">
    <citation type="journal article" date="2004" name="Nat. Genet.">
        <title>Complete sequencing and characterization of 21,243 full-length human cDNAs.</title>
        <authorList>
            <person name="Ota T."/>
            <person name="Suzuki Y."/>
            <person name="Nishikawa T."/>
            <person name="Otsuki T."/>
            <person name="Sugiyama T."/>
            <person name="Irie R."/>
            <person name="Wakamatsu A."/>
            <person name="Hayashi K."/>
            <person name="Sato H."/>
            <person name="Nagai K."/>
            <person name="Kimura K."/>
            <person name="Makita H."/>
            <person name="Sekine M."/>
            <person name="Obayashi M."/>
            <person name="Nishi T."/>
            <person name="Shibahara T."/>
            <person name="Tanaka T."/>
            <person name="Ishii S."/>
            <person name="Yamamoto J."/>
            <person name="Saito K."/>
            <person name="Kawai Y."/>
            <person name="Isono Y."/>
            <person name="Nakamura Y."/>
            <person name="Nagahari K."/>
            <person name="Murakami K."/>
            <person name="Yasuda T."/>
            <person name="Iwayanagi T."/>
            <person name="Wagatsuma M."/>
            <person name="Shiratori A."/>
            <person name="Sudo H."/>
            <person name="Hosoiri T."/>
            <person name="Kaku Y."/>
            <person name="Kodaira H."/>
            <person name="Kondo H."/>
            <person name="Sugawara M."/>
            <person name="Takahashi M."/>
            <person name="Kanda K."/>
            <person name="Yokoi T."/>
            <person name="Furuya T."/>
            <person name="Kikkawa E."/>
            <person name="Omura Y."/>
            <person name="Abe K."/>
            <person name="Kamihara K."/>
            <person name="Katsuta N."/>
            <person name="Sato K."/>
            <person name="Tanikawa M."/>
            <person name="Yamazaki M."/>
            <person name="Ninomiya K."/>
            <person name="Ishibashi T."/>
            <person name="Yamashita H."/>
            <person name="Murakawa K."/>
            <person name="Fujimori K."/>
            <person name="Tanai H."/>
            <person name="Kimata M."/>
            <person name="Watanabe M."/>
            <person name="Hiraoka S."/>
            <person name="Chiba Y."/>
            <person name="Ishida S."/>
            <person name="Ono Y."/>
            <person name="Takiguchi S."/>
            <person name="Watanabe S."/>
            <person name="Yosida M."/>
            <person name="Hotuta T."/>
            <person name="Kusano J."/>
            <person name="Kanehori K."/>
            <person name="Takahashi-Fujii A."/>
            <person name="Hara H."/>
            <person name="Tanase T.-O."/>
            <person name="Nomura Y."/>
            <person name="Togiya S."/>
            <person name="Komai F."/>
            <person name="Hara R."/>
            <person name="Takeuchi K."/>
            <person name="Arita M."/>
            <person name="Imose N."/>
            <person name="Musashino K."/>
            <person name="Yuuki H."/>
            <person name="Oshima A."/>
            <person name="Sasaki N."/>
            <person name="Aotsuka S."/>
            <person name="Yoshikawa Y."/>
            <person name="Matsunawa H."/>
            <person name="Ichihara T."/>
            <person name="Shiohata N."/>
            <person name="Sano S."/>
            <person name="Moriya S."/>
            <person name="Momiyama H."/>
            <person name="Satoh N."/>
            <person name="Takami S."/>
            <person name="Terashima Y."/>
            <person name="Suzuki O."/>
            <person name="Nakagawa S."/>
            <person name="Senoh A."/>
            <person name="Mizoguchi H."/>
            <person name="Goto Y."/>
            <person name="Shimizu F."/>
            <person name="Wakebe H."/>
            <person name="Hishigaki H."/>
            <person name="Watanabe T."/>
            <person name="Sugiyama A."/>
            <person name="Takemoto M."/>
            <person name="Kawakami B."/>
            <person name="Yamazaki M."/>
            <person name="Watanabe K."/>
            <person name="Kumagai A."/>
            <person name="Itakura S."/>
            <person name="Fukuzumi Y."/>
            <person name="Fujimori Y."/>
            <person name="Komiyama M."/>
            <person name="Tashiro H."/>
            <person name="Tanigami A."/>
            <person name="Fujiwara T."/>
            <person name="Ono T."/>
            <person name="Yamada K."/>
            <person name="Fujii Y."/>
            <person name="Ozaki K."/>
            <person name="Hirao M."/>
            <person name="Ohmori Y."/>
            <person name="Kawabata A."/>
            <person name="Hikiji T."/>
            <person name="Kobatake N."/>
            <person name="Inagaki H."/>
            <person name="Ikema Y."/>
            <person name="Okamoto S."/>
            <person name="Okitani R."/>
            <person name="Kawakami T."/>
            <person name="Noguchi S."/>
            <person name="Itoh T."/>
            <person name="Shigeta K."/>
            <person name="Senba T."/>
            <person name="Matsumura K."/>
            <person name="Nakajima Y."/>
            <person name="Mizuno T."/>
            <person name="Morinaga M."/>
            <person name="Sasaki M."/>
            <person name="Togashi T."/>
            <person name="Oyama M."/>
            <person name="Hata H."/>
            <person name="Watanabe M."/>
            <person name="Komatsu T."/>
            <person name="Mizushima-Sugano J."/>
            <person name="Satoh T."/>
            <person name="Shirai Y."/>
            <person name="Takahashi Y."/>
            <person name="Nakagawa K."/>
            <person name="Okumura K."/>
            <person name="Nagase T."/>
            <person name="Nomura N."/>
            <person name="Kikuchi H."/>
            <person name="Masuho Y."/>
            <person name="Yamashita R."/>
            <person name="Nakai K."/>
            <person name="Yada T."/>
            <person name="Nakamura Y."/>
            <person name="Ohara O."/>
            <person name="Isogai T."/>
            <person name="Sugano S."/>
        </authorList>
    </citation>
    <scope>NUCLEOTIDE SEQUENCE [LARGE SCALE MRNA] (ISOFORM 2)</scope>
    <source>
        <tissue>Amygdala</tissue>
    </source>
</reference>
<reference key="4">
    <citation type="journal article" date="2003" name="Nature">
        <title>The DNA sequence and analysis of human chromosome 6.</title>
        <authorList>
            <person name="Mungall A.J."/>
            <person name="Palmer S.A."/>
            <person name="Sims S.K."/>
            <person name="Edwards C.A."/>
            <person name="Ashurst J.L."/>
            <person name="Wilming L."/>
            <person name="Jones M.C."/>
            <person name="Horton R."/>
            <person name="Hunt S.E."/>
            <person name="Scott C.E."/>
            <person name="Gilbert J.G.R."/>
            <person name="Clamp M.E."/>
            <person name="Bethel G."/>
            <person name="Milne S."/>
            <person name="Ainscough R."/>
            <person name="Almeida J.P."/>
            <person name="Ambrose K.D."/>
            <person name="Andrews T.D."/>
            <person name="Ashwell R.I.S."/>
            <person name="Babbage A.K."/>
            <person name="Bagguley C.L."/>
            <person name="Bailey J."/>
            <person name="Banerjee R."/>
            <person name="Barker D.J."/>
            <person name="Barlow K.F."/>
            <person name="Bates K."/>
            <person name="Beare D.M."/>
            <person name="Beasley H."/>
            <person name="Beasley O."/>
            <person name="Bird C.P."/>
            <person name="Blakey S.E."/>
            <person name="Bray-Allen S."/>
            <person name="Brook J."/>
            <person name="Brown A.J."/>
            <person name="Brown J.Y."/>
            <person name="Burford D.C."/>
            <person name="Burrill W."/>
            <person name="Burton J."/>
            <person name="Carder C."/>
            <person name="Carter N.P."/>
            <person name="Chapman J.C."/>
            <person name="Clark S.Y."/>
            <person name="Clark G."/>
            <person name="Clee C.M."/>
            <person name="Clegg S."/>
            <person name="Cobley V."/>
            <person name="Collier R.E."/>
            <person name="Collins J.E."/>
            <person name="Colman L.K."/>
            <person name="Corby N.R."/>
            <person name="Coville G.J."/>
            <person name="Culley K.M."/>
            <person name="Dhami P."/>
            <person name="Davies J."/>
            <person name="Dunn M."/>
            <person name="Earthrowl M.E."/>
            <person name="Ellington A.E."/>
            <person name="Evans K.A."/>
            <person name="Faulkner L."/>
            <person name="Francis M.D."/>
            <person name="Frankish A."/>
            <person name="Frankland J."/>
            <person name="French L."/>
            <person name="Garner P."/>
            <person name="Garnett J."/>
            <person name="Ghori M.J."/>
            <person name="Gilby L.M."/>
            <person name="Gillson C.J."/>
            <person name="Glithero R.J."/>
            <person name="Grafham D.V."/>
            <person name="Grant M."/>
            <person name="Gribble S."/>
            <person name="Griffiths C."/>
            <person name="Griffiths M.N.D."/>
            <person name="Hall R."/>
            <person name="Halls K.S."/>
            <person name="Hammond S."/>
            <person name="Harley J.L."/>
            <person name="Hart E.A."/>
            <person name="Heath P.D."/>
            <person name="Heathcott R."/>
            <person name="Holmes S.J."/>
            <person name="Howden P.J."/>
            <person name="Howe K.L."/>
            <person name="Howell G.R."/>
            <person name="Huckle E."/>
            <person name="Humphray S.J."/>
            <person name="Humphries M.D."/>
            <person name="Hunt A.R."/>
            <person name="Johnson C.M."/>
            <person name="Joy A.A."/>
            <person name="Kay M."/>
            <person name="Keenan S.J."/>
            <person name="Kimberley A.M."/>
            <person name="King A."/>
            <person name="Laird G.K."/>
            <person name="Langford C."/>
            <person name="Lawlor S."/>
            <person name="Leongamornlert D.A."/>
            <person name="Leversha M."/>
            <person name="Lloyd C.R."/>
            <person name="Lloyd D.M."/>
            <person name="Loveland J.E."/>
            <person name="Lovell J."/>
            <person name="Martin S."/>
            <person name="Mashreghi-Mohammadi M."/>
            <person name="Maslen G.L."/>
            <person name="Matthews L."/>
            <person name="McCann O.T."/>
            <person name="McLaren S.J."/>
            <person name="McLay K."/>
            <person name="McMurray A."/>
            <person name="Moore M.J.F."/>
            <person name="Mullikin J.C."/>
            <person name="Niblett D."/>
            <person name="Nickerson T."/>
            <person name="Novik K.L."/>
            <person name="Oliver K."/>
            <person name="Overton-Larty E.K."/>
            <person name="Parker A."/>
            <person name="Patel R."/>
            <person name="Pearce A.V."/>
            <person name="Peck A.I."/>
            <person name="Phillimore B.J.C.T."/>
            <person name="Phillips S."/>
            <person name="Plumb R.W."/>
            <person name="Porter K.M."/>
            <person name="Ramsey Y."/>
            <person name="Ranby S.A."/>
            <person name="Rice C.M."/>
            <person name="Ross M.T."/>
            <person name="Searle S.M."/>
            <person name="Sehra H.K."/>
            <person name="Sheridan E."/>
            <person name="Skuce C.D."/>
            <person name="Smith S."/>
            <person name="Smith M."/>
            <person name="Spraggon L."/>
            <person name="Squares S.L."/>
            <person name="Steward C.A."/>
            <person name="Sycamore N."/>
            <person name="Tamlyn-Hall G."/>
            <person name="Tester J."/>
            <person name="Theaker A.J."/>
            <person name="Thomas D.W."/>
            <person name="Thorpe A."/>
            <person name="Tracey A."/>
            <person name="Tromans A."/>
            <person name="Tubby B."/>
            <person name="Wall M."/>
            <person name="Wallis J.M."/>
            <person name="West A.P."/>
            <person name="White S.S."/>
            <person name="Whitehead S.L."/>
            <person name="Whittaker H."/>
            <person name="Wild A."/>
            <person name="Willey D.J."/>
            <person name="Wilmer T.E."/>
            <person name="Wood J.M."/>
            <person name="Wray P.W."/>
            <person name="Wyatt J.C."/>
            <person name="Young L."/>
            <person name="Younger R.M."/>
            <person name="Bentley D.R."/>
            <person name="Coulson A."/>
            <person name="Durbin R.M."/>
            <person name="Hubbard T."/>
            <person name="Sulston J.E."/>
            <person name="Dunham I."/>
            <person name="Rogers J."/>
            <person name="Beck S."/>
        </authorList>
    </citation>
    <scope>NUCLEOTIDE SEQUENCE [LARGE SCALE GENOMIC DNA]</scope>
</reference>
<reference key="5">
    <citation type="submission" date="2005-07" db="EMBL/GenBank/DDBJ databases">
        <authorList>
            <person name="Mural R.J."/>
            <person name="Istrail S."/>
            <person name="Sutton G.G."/>
            <person name="Florea L."/>
            <person name="Halpern A.L."/>
            <person name="Mobarry C.M."/>
            <person name="Lippert R."/>
            <person name="Walenz B."/>
            <person name="Shatkay H."/>
            <person name="Dew I."/>
            <person name="Miller J.R."/>
            <person name="Flanigan M.J."/>
            <person name="Edwards N.J."/>
            <person name="Bolanos R."/>
            <person name="Fasulo D."/>
            <person name="Halldorsson B.V."/>
            <person name="Hannenhalli S."/>
            <person name="Turner R."/>
            <person name="Yooseph S."/>
            <person name="Lu F."/>
            <person name="Nusskern D.R."/>
            <person name="Shue B.C."/>
            <person name="Zheng X.H."/>
            <person name="Zhong F."/>
            <person name="Delcher A.L."/>
            <person name="Huson D.H."/>
            <person name="Kravitz S.A."/>
            <person name="Mouchard L."/>
            <person name="Reinert K."/>
            <person name="Remington K.A."/>
            <person name="Clark A.G."/>
            <person name="Waterman M.S."/>
            <person name="Eichler E.E."/>
            <person name="Adams M.D."/>
            <person name="Hunkapiller M.W."/>
            <person name="Myers E.W."/>
            <person name="Venter J.C."/>
        </authorList>
    </citation>
    <scope>NUCLEOTIDE SEQUENCE [LARGE SCALE GENOMIC DNA]</scope>
</reference>
<reference key="6">
    <citation type="journal article" date="2004" name="Genome Res.">
        <title>The status, quality, and expansion of the NIH full-length cDNA project: the Mammalian Gene Collection (MGC).</title>
        <authorList>
            <consortium name="The MGC Project Team"/>
        </authorList>
    </citation>
    <scope>NUCLEOTIDE SEQUENCE [LARGE SCALE MRNA] (ISOFORM 1)</scope>
    <source>
        <tissue>Testis</tissue>
    </source>
</reference>
<reference key="7">
    <citation type="journal article" date="1996" name="Cytogenet. Cell Genet.">
        <title>Isolation and mapping of RAB2L, a human cDNA that encodes a protein homologous to RalGDS.</title>
        <authorList>
            <person name="Isomura M."/>
            <person name="Okui K."/>
            <person name="Fujiwara T."/>
            <person name="Shin S."/>
            <person name="Nakamura Y."/>
        </authorList>
    </citation>
    <scope>NUCLEOTIDE SEQUENCE [MRNA] OF 656-777 (ISOFORM 1)</scope>
</reference>
<reference key="8">
    <citation type="journal article" date="2006" name="Nat. Biotechnol.">
        <title>A probability-based approach for high-throughput protein phosphorylation analysis and site localization.</title>
        <authorList>
            <person name="Beausoleil S.A."/>
            <person name="Villen J."/>
            <person name="Gerber S.A."/>
            <person name="Rush J."/>
            <person name="Gygi S.P."/>
        </authorList>
    </citation>
    <scope>IDENTIFICATION BY MASS SPECTROMETRY [LARGE SCALE ANALYSIS]</scope>
    <source>
        <tissue>Cervix carcinoma</tissue>
    </source>
</reference>
<reference key="9">
    <citation type="journal article" date="2010" name="Sci. Signal.">
        <title>Quantitative phosphoproteomics reveals widespread full phosphorylation site occupancy during mitosis.</title>
        <authorList>
            <person name="Olsen J.V."/>
            <person name="Vermeulen M."/>
            <person name="Santamaria A."/>
            <person name="Kumar C."/>
            <person name="Miller M.L."/>
            <person name="Jensen L.J."/>
            <person name="Gnad F."/>
            <person name="Cox J."/>
            <person name="Jensen T.S."/>
            <person name="Nigg E.A."/>
            <person name="Brunak S."/>
            <person name="Mann M."/>
        </authorList>
    </citation>
    <scope>IDENTIFICATION BY MASS SPECTROMETRY [LARGE SCALE ANALYSIS]</scope>
    <source>
        <tissue>Cervix carcinoma</tissue>
    </source>
</reference>
<reference key="10">
    <citation type="journal article" date="2011" name="J. Invest. Dermatol.">
        <title>Functional characterization of SAMD9, a protein deficient in normophosphatemic familial tumoral calcinosis.</title>
        <authorList>
            <person name="Hershkovitz D."/>
            <person name="Gross Y."/>
            <person name="Nahum S."/>
            <person name="Yehezkel S."/>
            <person name="Sarig O."/>
            <person name="Uitto J."/>
            <person name="Sprecher E."/>
        </authorList>
    </citation>
    <scope>INTERACTION WITH SAMD9</scope>
</reference>
<reference key="11">
    <citation type="journal article" date="2013" name="J. Proteome Res.">
        <title>Toward a comprehensive characterization of a human cancer cell phosphoproteome.</title>
        <authorList>
            <person name="Zhou H."/>
            <person name="Di Palma S."/>
            <person name="Preisinger C."/>
            <person name="Peng M."/>
            <person name="Polat A.N."/>
            <person name="Heck A.J."/>
            <person name="Mohammed S."/>
        </authorList>
    </citation>
    <scope>PHOSPHORYLATION [LARGE SCALE ANALYSIS] AT SER-13 AND SER-409</scope>
    <scope>IDENTIFICATION BY MASS SPECTROMETRY [LARGE SCALE ANALYSIS]</scope>
    <source>
        <tissue>Cervix carcinoma</tissue>
        <tissue>Erythroleukemia</tissue>
    </source>
</reference>
<reference key="12">
    <citation type="journal article" date="2014" name="J. Proteomics">
        <title>An enzyme assisted RP-RPLC approach for in-depth analysis of human liver phosphoproteome.</title>
        <authorList>
            <person name="Bian Y."/>
            <person name="Song C."/>
            <person name="Cheng K."/>
            <person name="Dong M."/>
            <person name="Wang F."/>
            <person name="Huang J."/>
            <person name="Sun D."/>
            <person name="Wang L."/>
            <person name="Ye M."/>
            <person name="Zou H."/>
        </authorList>
    </citation>
    <scope>IDENTIFICATION BY MASS SPECTROMETRY [LARGE SCALE ANALYSIS]</scope>
    <source>
        <tissue>Liver</tissue>
    </source>
</reference>
<evidence type="ECO:0000250" key="1"/>
<evidence type="ECO:0000255" key="2">
    <source>
        <dbReference type="PROSITE-ProRule" id="PRU00135"/>
    </source>
</evidence>
<evidence type="ECO:0000255" key="3">
    <source>
        <dbReference type="PROSITE-ProRule" id="PRU00166"/>
    </source>
</evidence>
<evidence type="ECO:0000255" key="4">
    <source>
        <dbReference type="PROSITE-ProRule" id="PRU00168"/>
    </source>
</evidence>
<evidence type="ECO:0000256" key="5">
    <source>
        <dbReference type="SAM" id="MobiDB-lite"/>
    </source>
</evidence>
<evidence type="ECO:0000269" key="6">
    <source>
    </source>
</evidence>
<evidence type="ECO:0000303" key="7">
    <source>
    </source>
</evidence>
<evidence type="ECO:0000305" key="8"/>
<evidence type="ECO:0007744" key="9">
    <source>
    </source>
</evidence>
<evidence type="ECO:0007829" key="10">
    <source>
        <dbReference type="PDB" id="8AU4"/>
    </source>
</evidence>
<evidence type="ECO:0007829" key="11">
    <source>
        <dbReference type="PDB" id="8B69"/>
    </source>
</evidence>
<sequence>MLPRPLRLLLDTSPPGGVVLSSFRSRDPEEGGGPGGLVVGGGQEEEEEEEEEAPVSVWDEEEDGAVFTVTSRQYRPLDPLVPMPPPRSSRRLRAGTLEALVRHLLDTRTSGTDVSFMSAFLATHRAFTSTPALLGLMADRLEALESHPTDELERTTEVAISVLSTWLASHPEDFGSEAKGQLDRLESFLLQTGYAAGKGVGGGSADLIRNLRSRVDPQAPDLPKPLALPGDPPADPTDVLVFLADHLAEQLTLLDAELFLNLIPSQCLGGLWGHRDRPGHSHLCPSVRATVTQFNKVAGAVVSSVLGATSTGEGPGEVTIRPLRPPQRARLLEKWIRVAEECRLLRNFSSVYAVVSALQSSPIHRLRAAWGEATRDSLRVFSSLCQIFSEEDNYSQSRELLVQEVKLQSPLEPHSKKAPRSGSRGGGVVPYLGTFLKDLVMLDAASKDELENGYINFDKRRKEFAVLSELRRLQNECRGYNLQPDHDIQRWLQGLRPLTEAQSHRVSCEVEPPGSSDPPAPRVLRPTLVISQWTEVLGSVGVPTPLVSCDRPSTGGDEAPTTPAPLLTRLAQHMKWPSVSSLDSALESSPSLHSPADPSHLSPPASSPRPSRGHRRSASCGSPLSGGAEEASGGTGYGGEGSGPGASDCRIIRVQMELGEDGSVYKSILVTSQDKAPSVISRVLKKNNRDSAVASEYELVQLLPGERELTIPASANVFYAMDGASHDFLLRQRRRSSTATPGVTSGPSASGTPPSEGGGGSFPRIKATGRKIARALF</sequence>
<feature type="chain" id="PRO_0000068888" description="Ral guanine nucleotide dissociation stimulator-like 2">
    <location>
        <begin position="1"/>
        <end position="777"/>
    </location>
</feature>
<feature type="domain" description="N-terminal Ras-GEF" evidence="2">
    <location>
        <begin position="88"/>
        <end position="212"/>
    </location>
</feature>
<feature type="domain" description="Ras-GEF" evidence="4">
    <location>
        <begin position="243"/>
        <end position="513"/>
    </location>
</feature>
<feature type="domain" description="Ras-associating" evidence="3">
    <location>
        <begin position="648"/>
        <end position="735"/>
    </location>
</feature>
<feature type="region of interest" description="Disordered" evidence="5">
    <location>
        <begin position="1"/>
        <end position="54"/>
    </location>
</feature>
<feature type="region of interest" description="Disordered" evidence="5">
    <location>
        <begin position="581"/>
        <end position="644"/>
    </location>
</feature>
<feature type="region of interest" description="Disordered" evidence="5">
    <location>
        <begin position="734"/>
        <end position="766"/>
    </location>
</feature>
<feature type="compositionally biased region" description="Gly residues" evidence="5">
    <location>
        <begin position="31"/>
        <end position="42"/>
    </location>
</feature>
<feature type="compositionally biased region" description="Acidic residues" evidence="5">
    <location>
        <begin position="43"/>
        <end position="54"/>
    </location>
</feature>
<feature type="compositionally biased region" description="Low complexity" evidence="5">
    <location>
        <begin position="581"/>
        <end position="610"/>
    </location>
</feature>
<feature type="compositionally biased region" description="Low complexity" evidence="5">
    <location>
        <begin position="618"/>
        <end position="632"/>
    </location>
</feature>
<feature type="compositionally biased region" description="Gly residues" evidence="5">
    <location>
        <begin position="633"/>
        <end position="644"/>
    </location>
</feature>
<feature type="compositionally biased region" description="Low complexity" evidence="5">
    <location>
        <begin position="740"/>
        <end position="755"/>
    </location>
</feature>
<feature type="modified residue" description="Phosphoserine" evidence="9">
    <location>
        <position position="13"/>
    </location>
</feature>
<feature type="modified residue" description="Phosphoserine" evidence="9">
    <location>
        <position position="409"/>
    </location>
</feature>
<feature type="splice variant" id="VSP_055847" description="In isoform 2." evidence="7">
    <location>
        <begin position="1"/>
        <end position="82"/>
    </location>
</feature>
<feature type="splice variant" id="VSP_055848" description="In isoform 2." evidence="7">
    <original>K</original>
    <variation>KVSGVSGLDAGLPYPCSRKGRGKSQGSLSFGSCSLRAPSQ</variation>
    <location>
        <position position="462"/>
    </location>
</feature>
<feature type="splice variant" id="VSP_055849" description="In isoform 2." evidence="7">
    <location>
        <begin position="504"/>
        <end position="777"/>
    </location>
</feature>
<feature type="sequence variant" id="VAR_051903" description="In dbSNP:rs34022110.">
    <original>P</original>
    <variation>L</variation>
    <location>
        <position position="598"/>
    </location>
</feature>
<feature type="sequence variant" id="VAR_051904" description="In dbSNP:rs35273540.">
    <original>G</original>
    <variation>E</variation>
    <location>
        <position position="705"/>
    </location>
</feature>
<feature type="sequence conflict" description="In Ref. 3; BAG57683." evidence="8" ref="3">
    <original>S</original>
    <variation>R</variation>
    <location>
        <position position="503"/>
    </location>
</feature>
<feature type="sequence conflict" description="In Ref. 7; BAA75926." evidence="8" ref="7">
    <original>A</original>
    <variation>P</variation>
    <location>
        <position position="720"/>
    </location>
</feature>
<feature type="strand" evidence="11">
    <location>
        <begin position="648"/>
        <end position="655"/>
    </location>
</feature>
<feature type="helix" evidence="10">
    <location>
        <begin position="659"/>
        <end position="661"/>
    </location>
</feature>
<feature type="strand" evidence="11">
    <location>
        <begin position="662"/>
        <end position="671"/>
    </location>
</feature>
<feature type="helix" evidence="11">
    <location>
        <begin position="676"/>
        <end position="686"/>
    </location>
</feature>
<feature type="strand" evidence="11">
    <location>
        <begin position="694"/>
        <end position="696"/>
    </location>
</feature>
<feature type="strand" evidence="11">
    <location>
        <begin position="698"/>
        <end position="703"/>
    </location>
</feature>
<feature type="turn" evidence="11">
    <location>
        <begin position="704"/>
        <end position="706"/>
    </location>
</feature>
<feature type="strand" evidence="11">
    <location>
        <begin position="707"/>
        <end position="710"/>
    </location>
</feature>
<feature type="helix" evidence="11">
    <location>
        <begin position="717"/>
        <end position="720"/>
    </location>
</feature>
<feature type="strand" evidence="11">
    <location>
        <begin position="727"/>
        <end position="731"/>
    </location>
</feature>
<comment type="function">
    <text evidence="1">Probable guanine nucleotide exchange factor. Putative effector of Ras and/or Rap. Associates with the GTP-bound form of Rap 1A and H-Ras in vitro (By similarity).</text>
</comment>
<comment type="subunit">
    <text evidence="6">Interacts with SAMD9.</text>
</comment>
<comment type="interaction">
    <interactant intactId="EBI-712355">
        <id>O15211</id>
    </interactant>
    <interactant intactId="EBI-10173507">
        <id>Q6UY14-3</id>
        <label>ADAMTSL4</label>
    </interactant>
    <organismsDiffer>false</organismsDiffer>
    <experiments>3</experiments>
</comment>
<comment type="interaction">
    <interactant intactId="EBI-712355">
        <id>O15211</id>
    </interactant>
    <interactant intactId="EBI-3867333">
        <id>A8MQ03</id>
        <label>CYSRT1</label>
    </interactant>
    <organismsDiffer>false</organismsDiffer>
    <experiments>3</experiments>
</comment>
<comment type="interaction">
    <interactant intactId="EBI-712355">
        <id>O15211</id>
    </interactant>
    <interactant intactId="EBI-739467">
        <id>Q9H8Y8</id>
        <label>GORASP2</label>
    </interactant>
    <organismsDiffer>false</organismsDiffer>
    <experiments>3</experiments>
</comment>
<comment type="interaction">
    <interactant intactId="EBI-712355">
        <id>O15211</id>
    </interactant>
    <interactant intactId="EBI-350145">
        <id>P01112</id>
        <label>HRAS</label>
    </interactant>
    <organismsDiffer>false</organismsDiffer>
    <experiments>3</experiments>
</comment>
<comment type="interaction">
    <interactant intactId="EBI-712355">
        <id>O15211</id>
    </interactant>
    <interactant intactId="EBI-10981970">
        <id>Q5T749</id>
        <label>KPRP</label>
    </interactant>
    <organismsDiffer>false</organismsDiffer>
    <experiments>3</experiments>
</comment>
<comment type="interaction">
    <interactant intactId="EBI-712355">
        <id>O15211</id>
    </interactant>
    <interactant intactId="EBI-10171774">
        <id>P60410</id>
        <label>KRTAP10-8</label>
    </interactant>
    <organismsDiffer>false</organismsDiffer>
    <experiments>3</experiments>
</comment>
<comment type="interaction">
    <interactant intactId="EBI-712355">
        <id>O15211</id>
    </interactant>
    <interactant intactId="EBI-945833">
        <id>Q7Z3S9</id>
        <label>NOTCH2NLA</label>
    </interactant>
    <organismsDiffer>false</organismsDiffer>
    <experiments>3</experiments>
</comment>
<comment type="alternative products">
    <event type="alternative splicing"/>
    <isoform>
        <id>O15211-1</id>
        <name>1</name>
        <sequence type="displayed"/>
    </isoform>
    <isoform>
        <id>O15211-2</id>
        <name>2</name>
        <sequence type="described" ref="VSP_055847 VSP_055848 VSP_055849"/>
    </isoform>
</comment>
<accession>O15211</accession>
<accession>B4DG72</accession>
<accession>Q5STK0</accession>
<accession>Q9Y3F3</accession>
<proteinExistence type="evidence at protein level"/>
<gene>
    <name type="primary">RGL2</name>
    <name type="synonym">RAB2L</name>
</gene>
<keyword id="KW-0002">3D-structure</keyword>
<keyword id="KW-0025">Alternative splicing</keyword>
<keyword id="KW-0344">Guanine-nucleotide releasing factor</keyword>
<keyword id="KW-0597">Phosphoprotein</keyword>
<keyword id="KW-1267">Proteomics identification</keyword>
<keyword id="KW-1185">Reference proteome</keyword>
<protein>
    <recommendedName>
        <fullName>Ral guanine nucleotide dissociation stimulator-like 2</fullName>
        <shortName>RalGDS-like 2</shortName>
    </recommendedName>
    <alternativeName>
        <fullName>RalGDS-like factor</fullName>
    </alternativeName>
    <alternativeName>
        <fullName>Ras-associated protein RAB2L</fullName>
    </alternativeName>
</protein>
<organism>
    <name type="scientific">Homo sapiens</name>
    <name type="common">Human</name>
    <dbReference type="NCBI Taxonomy" id="9606"/>
    <lineage>
        <taxon>Eukaryota</taxon>
        <taxon>Metazoa</taxon>
        <taxon>Chordata</taxon>
        <taxon>Craniata</taxon>
        <taxon>Vertebrata</taxon>
        <taxon>Euteleostomi</taxon>
        <taxon>Mammalia</taxon>
        <taxon>Eutheria</taxon>
        <taxon>Euarchontoglires</taxon>
        <taxon>Primates</taxon>
        <taxon>Haplorrhini</taxon>
        <taxon>Catarrhini</taxon>
        <taxon>Hominidae</taxon>
        <taxon>Homo</taxon>
    </lineage>
</organism>